<organismHost>
    <name type="scientific">Homo sapiens</name>
    <name type="common">Human</name>
    <dbReference type="NCBI Taxonomy" id="9606"/>
</organismHost>
<reference key="1">
    <citation type="journal article" date="1998" name="Virology">
        <title>The complete genomic sequence of the modified vaccinia Ankara strain: comparison with other orthopoxviruses.</title>
        <authorList>
            <person name="Antoine G."/>
            <person name="Scheiflinger F."/>
            <person name="Dorner F."/>
            <person name="Falkner F.G."/>
        </authorList>
    </citation>
    <scope>NUCLEOTIDE SEQUENCE [LARGE SCALE GENOMIC DNA]</scope>
</reference>
<reference key="2">
    <citation type="submission" date="2004-04" db="EMBL/GenBank/DDBJ databases">
        <authorList>
            <person name="Esposito J.J."/>
            <person name="Frace M."/>
            <person name="Sammons S.A."/>
            <person name="Olsen-Rasmussen M.S."/>
            <person name="Osborne J."/>
            <person name="Khristova M."/>
            <person name="Wohlhueter R.M."/>
        </authorList>
    </citation>
    <scope>NUCLEOTIDE SEQUENCE [LARGE SCALE GENOMIC DNA]</scope>
    <source>
        <strain>Isolate Acambis 3000</strain>
    </source>
</reference>
<keyword id="KW-1015">Disulfide bond</keyword>
<keyword id="KW-0244">Early protein</keyword>
<keyword id="KW-1040">Host Golgi apparatus</keyword>
<keyword id="KW-0449">Lipoprotein</keyword>
<keyword id="KW-0472">Membrane</keyword>
<keyword id="KW-0564">Palmitate</keyword>
<keyword id="KW-0677">Repeat</keyword>
<keyword id="KW-0732">Signal</keyword>
<keyword id="KW-0768">Sushi</keyword>
<keyword id="KW-0812">Transmembrane</keyword>
<keyword id="KW-1133">Transmembrane helix</keyword>
<keyword id="KW-0946">Virion</keyword>
<evidence type="ECO:0000250" key="1">
    <source>
        <dbReference type="UniProtKB" id="Q01227"/>
    </source>
</evidence>
<evidence type="ECO:0000255" key="2"/>
<evidence type="ECO:0000255" key="3">
    <source>
        <dbReference type="PROSITE-ProRule" id="PRU00302"/>
    </source>
</evidence>
<evidence type="ECO:0000305" key="4"/>
<name>PG190_VACCA</name>
<accession>O57254</accession>
<proteinExistence type="evidence at transcript level"/>
<dbReference type="EMBL" id="U94848">
    <property type="protein sequence ID" value="AAB96547.1"/>
    <property type="molecule type" value="Genomic_DNA"/>
</dbReference>
<dbReference type="EMBL" id="AY603355">
    <property type="protein sequence ID" value="AAT10569.1"/>
    <property type="molecule type" value="Genomic_DNA"/>
</dbReference>
<dbReference type="PIR" id="T37442">
    <property type="entry name" value="T37442"/>
</dbReference>
<dbReference type="SMR" id="O57254"/>
<dbReference type="Proteomes" id="UP000159908">
    <property type="component" value="Segment"/>
</dbReference>
<dbReference type="Proteomes" id="UP000172909">
    <property type="component" value="Segment"/>
</dbReference>
<dbReference type="GO" id="GO:0044177">
    <property type="term" value="C:host cell Golgi apparatus"/>
    <property type="evidence" value="ECO:0007669"/>
    <property type="project" value="UniProtKB-SubCell"/>
</dbReference>
<dbReference type="GO" id="GO:0016020">
    <property type="term" value="C:membrane"/>
    <property type="evidence" value="ECO:0007669"/>
    <property type="project" value="UniProtKB-KW"/>
</dbReference>
<dbReference type="GO" id="GO:0055036">
    <property type="term" value="C:virion membrane"/>
    <property type="evidence" value="ECO:0007669"/>
    <property type="project" value="UniProtKB-SubCell"/>
</dbReference>
<dbReference type="GO" id="GO:0001848">
    <property type="term" value="F:complement binding"/>
    <property type="evidence" value="ECO:0007669"/>
    <property type="project" value="InterPro"/>
</dbReference>
<dbReference type="GO" id="GO:0045916">
    <property type="term" value="P:negative regulation of complement activation"/>
    <property type="evidence" value="ECO:0007669"/>
    <property type="project" value="InterPro"/>
</dbReference>
<dbReference type="CDD" id="cd00033">
    <property type="entry name" value="CCP"/>
    <property type="match status" value="3"/>
</dbReference>
<dbReference type="Gene3D" id="2.10.70.10">
    <property type="entry name" value="Complement Module, domain 1"/>
    <property type="match status" value="3"/>
</dbReference>
<dbReference type="InterPro" id="IPR011176">
    <property type="entry name" value="CCP_VACV_C3/B5"/>
</dbReference>
<dbReference type="InterPro" id="IPR051503">
    <property type="entry name" value="ComplSys_Reg/VirEntry_Med"/>
</dbReference>
<dbReference type="InterPro" id="IPR035976">
    <property type="entry name" value="Sushi/SCR/CCP_sf"/>
</dbReference>
<dbReference type="InterPro" id="IPR000436">
    <property type="entry name" value="Sushi_SCR_CCP_dom"/>
</dbReference>
<dbReference type="PANTHER" id="PTHR45785">
    <property type="entry name" value="COMPLEMENT FACTOR H-RELATED"/>
    <property type="match status" value="1"/>
</dbReference>
<dbReference type="PANTHER" id="PTHR45785:SF2">
    <property type="entry name" value="COMPLEMENT FACTOR H-RELATED"/>
    <property type="match status" value="1"/>
</dbReference>
<dbReference type="Pfam" id="PF00084">
    <property type="entry name" value="Sushi"/>
    <property type="match status" value="3"/>
</dbReference>
<dbReference type="PIRSF" id="PIRSF002486">
    <property type="entry name" value="CIP_VAC_C3L"/>
    <property type="match status" value="1"/>
</dbReference>
<dbReference type="SMART" id="SM00032">
    <property type="entry name" value="CCP"/>
    <property type="match status" value="4"/>
</dbReference>
<dbReference type="SUPFAM" id="SSF57535">
    <property type="entry name" value="Complement control module/SCR domain"/>
    <property type="match status" value="3"/>
</dbReference>
<dbReference type="PROSITE" id="PS50923">
    <property type="entry name" value="SUSHI"/>
    <property type="match status" value="3"/>
</dbReference>
<organism>
    <name type="scientific">Vaccinia virus (strain Ankara)</name>
    <name type="common">VACV</name>
    <dbReference type="NCBI Taxonomy" id="126794"/>
    <lineage>
        <taxon>Viruses</taxon>
        <taxon>Varidnaviria</taxon>
        <taxon>Bamfordvirae</taxon>
        <taxon>Nucleocytoviricota</taxon>
        <taxon>Pokkesviricetes</taxon>
        <taxon>Chitovirales</taxon>
        <taxon>Poxviridae</taxon>
        <taxon>Chordopoxvirinae</taxon>
        <taxon>Orthopoxvirus</taxon>
        <taxon>Vaccinia virus</taxon>
    </lineage>
</organism>
<feature type="signal peptide" evidence="2">
    <location>
        <begin position="1"/>
        <end position="17"/>
    </location>
</feature>
<feature type="chain" id="PRO_0000006016" description="Protein OPG190">
    <location>
        <begin position="18"/>
        <end position="317"/>
    </location>
</feature>
<feature type="transmembrane region" description="Helical" evidence="2">
    <location>
        <begin position="280"/>
        <end position="300"/>
    </location>
</feature>
<feature type="domain" description="Sushi 1" evidence="3">
    <location>
        <begin position="19"/>
        <end position="74"/>
    </location>
</feature>
<feature type="domain" description="Sushi 2" evidence="3">
    <location>
        <begin position="75"/>
        <end position="126"/>
    </location>
</feature>
<feature type="domain" description="Sushi 3" evidence="3">
    <location>
        <begin position="127"/>
        <end position="184"/>
    </location>
</feature>
<feature type="domain" description="Sushi 4" evidence="3">
    <location>
        <begin position="185"/>
        <end position="239"/>
    </location>
</feature>
<feature type="lipid moiety-binding region" description="S-palmitoyl cysteine; by host" evidence="1">
    <location>
        <position position="301"/>
    </location>
</feature>
<feature type="lipid moiety-binding region" description="S-palmitoyl cysteine; by host" evidence="1">
    <location>
        <position position="303"/>
    </location>
</feature>
<feature type="disulfide bond" evidence="3">
    <location>
        <begin position="21"/>
        <end position="61"/>
    </location>
</feature>
<feature type="disulfide bond" evidence="3">
    <location>
        <begin position="48"/>
        <end position="72"/>
    </location>
</feature>
<feature type="disulfide bond" evidence="3">
    <location>
        <begin position="76"/>
        <end position="110"/>
    </location>
</feature>
<feature type="disulfide bond" evidence="3">
    <location>
        <begin position="101"/>
        <end position="125"/>
    </location>
</feature>
<feature type="disulfide bond" evidence="3">
    <location>
        <begin position="130"/>
        <end position="171"/>
    </location>
</feature>
<feature type="disulfide bond" evidence="3">
    <location>
        <begin position="157"/>
        <end position="182"/>
    </location>
</feature>
<feature type="disulfide bond" evidence="3">
    <location>
        <begin position="186"/>
        <end position="225"/>
    </location>
</feature>
<feature type="disulfide bond" evidence="3">
    <location>
        <begin position="211"/>
        <end position="237"/>
    </location>
</feature>
<gene>
    <name type="primary">OPG190</name>
    <name type="synonym">PS/HR</name>
    <name type="ordered locus">MVA173R</name>
    <name type="ordered locus">ACAM3000_MVA_173</name>
</gene>
<sequence length="317" mass="35078">MKTISVVTLLCVLPAVVYSTCTVPTMNNAKLTSTETSFNNNQKVTFTCDQGYHSSDPNAVCETDKWKYENPCKKMCTVSDYISELYNKPLYEVNSTMTLSCNGETKYFRCEEKNGNTSWNDTVTCPNAECQPLQLEHGSCQPVKEKYSFGEYITINCDVGYEVIGASYISCTANSWNVIPSCQQKCDIPSLSNGLISGSTFSIGGVIHLSCKSGFILTGSPSSTCIDGKWNPILPTCVRSNEKFDPVDDGPDDETDLSKLSKDVVQYEQEIESLEATYHIIIVALTIMGVIFLISVIVLVCSCDKNNDQYKFHKLLP</sequence>
<comment type="function">
    <text evidence="1">Plays a role in the dissolution of the outermost membrane of extracellular enveloped virions (EV) to allow virion entry into host cells. Also participates in wrapping mature virions (MV) to form enveloped virions (EV).</text>
</comment>
<comment type="subunit">
    <text evidence="1">Interacts with OPG161; this interaction is required for efficient targeting of OPG161 and OPG190 into enveloped virions. Interacts with OPG162; this interaction is required for the correct glycosylation, trafficking and stability of OPG162 and OPG190 incorporation into extracellular enveloped virions. Interacts with envelope phospholipase OPG057.</text>
</comment>
<comment type="subcellular location">
    <subcellularLocation>
        <location evidence="1">Virion membrane</location>
        <topology evidence="1">Single-pass type I membrane protein</topology>
    </subcellularLocation>
    <subcellularLocation>
        <location evidence="1">Host Golgi apparatus</location>
        <location evidence="1">Host trans-Golgi network</location>
    </subcellularLocation>
    <text evidence="1">OPG190 is found on enveloped virion (EV) membranes.</text>
</comment>
<comment type="induction">
    <text>Expressed in the early phase of the viral replicative cycle.</text>
</comment>
<comment type="similarity">
    <text evidence="4">Belongs to the receptors of complement activation (RCA) family.</text>
</comment>
<protein>
    <recommendedName>
        <fullName>Protein OPG190</fullName>
    </recommendedName>
    <alternativeName>
        <fullName>Plaque-size/host range protein</fullName>
    </alternativeName>
</protein>